<comment type="function">
    <text evidence="1">Involved in peptide bond synthesis. Stimulates efficient translation and peptide-bond synthesis on native or reconstituted 70S ribosomes in vitro. Probably functions indirectly by altering the affinity of the ribosome for aminoacyl-tRNA, thus increasing their reactivity as acceptors for peptidyl transferase.</text>
</comment>
<comment type="pathway">
    <text evidence="1">Protein biosynthesis; polypeptide chain elongation.</text>
</comment>
<comment type="subcellular location">
    <subcellularLocation>
        <location evidence="1">Cytoplasm</location>
    </subcellularLocation>
</comment>
<comment type="similarity">
    <text evidence="1">Belongs to the elongation factor P family.</text>
</comment>
<protein>
    <recommendedName>
        <fullName evidence="1">Elongation factor P</fullName>
        <shortName evidence="1">EF-P</shortName>
    </recommendedName>
</protein>
<dbReference type="EMBL" id="CP000384">
    <property type="protein sequence ID" value="ABG08466.1"/>
    <property type="molecule type" value="Genomic_DNA"/>
</dbReference>
<dbReference type="SMR" id="Q1B9G8"/>
<dbReference type="KEGG" id="mmc:Mmcs_2358"/>
<dbReference type="HOGENOM" id="CLU_074944_0_1_11"/>
<dbReference type="BioCyc" id="MSP164756:G1G6O-2410-MONOMER"/>
<dbReference type="UniPathway" id="UPA00345"/>
<dbReference type="GO" id="GO:0005737">
    <property type="term" value="C:cytoplasm"/>
    <property type="evidence" value="ECO:0007669"/>
    <property type="project" value="UniProtKB-SubCell"/>
</dbReference>
<dbReference type="GO" id="GO:0003746">
    <property type="term" value="F:translation elongation factor activity"/>
    <property type="evidence" value="ECO:0007669"/>
    <property type="project" value="UniProtKB-UniRule"/>
</dbReference>
<dbReference type="GO" id="GO:0043043">
    <property type="term" value="P:peptide biosynthetic process"/>
    <property type="evidence" value="ECO:0007669"/>
    <property type="project" value="InterPro"/>
</dbReference>
<dbReference type="CDD" id="cd04470">
    <property type="entry name" value="S1_EF-P_repeat_1"/>
    <property type="match status" value="1"/>
</dbReference>
<dbReference type="CDD" id="cd05794">
    <property type="entry name" value="S1_EF-P_repeat_2"/>
    <property type="match status" value="1"/>
</dbReference>
<dbReference type="FunFam" id="2.30.30.30:FF:000003">
    <property type="entry name" value="Elongation factor P"/>
    <property type="match status" value="1"/>
</dbReference>
<dbReference type="FunFam" id="2.40.50.140:FF:000004">
    <property type="entry name" value="Elongation factor P"/>
    <property type="match status" value="1"/>
</dbReference>
<dbReference type="FunFam" id="2.40.50.140:FF:000009">
    <property type="entry name" value="Elongation factor P"/>
    <property type="match status" value="1"/>
</dbReference>
<dbReference type="Gene3D" id="2.30.30.30">
    <property type="match status" value="1"/>
</dbReference>
<dbReference type="Gene3D" id="2.40.50.140">
    <property type="entry name" value="Nucleic acid-binding proteins"/>
    <property type="match status" value="2"/>
</dbReference>
<dbReference type="HAMAP" id="MF_00141">
    <property type="entry name" value="EF_P"/>
    <property type="match status" value="1"/>
</dbReference>
<dbReference type="InterPro" id="IPR015365">
    <property type="entry name" value="Elong-fact-P_C"/>
</dbReference>
<dbReference type="InterPro" id="IPR012340">
    <property type="entry name" value="NA-bd_OB-fold"/>
</dbReference>
<dbReference type="InterPro" id="IPR014722">
    <property type="entry name" value="Rib_uL2_dom2"/>
</dbReference>
<dbReference type="InterPro" id="IPR020599">
    <property type="entry name" value="Transl_elong_fac_P/YeiP"/>
</dbReference>
<dbReference type="InterPro" id="IPR013185">
    <property type="entry name" value="Transl_elong_KOW-like"/>
</dbReference>
<dbReference type="InterPro" id="IPR001059">
    <property type="entry name" value="Transl_elong_P/YeiP_cen"/>
</dbReference>
<dbReference type="InterPro" id="IPR013852">
    <property type="entry name" value="Transl_elong_P/YeiP_CS"/>
</dbReference>
<dbReference type="InterPro" id="IPR011768">
    <property type="entry name" value="Transl_elongation_fac_P"/>
</dbReference>
<dbReference type="InterPro" id="IPR008991">
    <property type="entry name" value="Translation_prot_SH3-like_sf"/>
</dbReference>
<dbReference type="NCBIfam" id="TIGR00038">
    <property type="entry name" value="efp"/>
    <property type="match status" value="1"/>
</dbReference>
<dbReference type="NCBIfam" id="NF001810">
    <property type="entry name" value="PRK00529.1"/>
    <property type="match status" value="1"/>
</dbReference>
<dbReference type="PANTHER" id="PTHR30053">
    <property type="entry name" value="ELONGATION FACTOR P"/>
    <property type="match status" value="1"/>
</dbReference>
<dbReference type="PANTHER" id="PTHR30053:SF12">
    <property type="entry name" value="ELONGATION FACTOR P (EF-P) FAMILY PROTEIN"/>
    <property type="match status" value="1"/>
</dbReference>
<dbReference type="Pfam" id="PF01132">
    <property type="entry name" value="EFP"/>
    <property type="match status" value="1"/>
</dbReference>
<dbReference type="Pfam" id="PF08207">
    <property type="entry name" value="EFP_N"/>
    <property type="match status" value="1"/>
</dbReference>
<dbReference type="Pfam" id="PF09285">
    <property type="entry name" value="Elong-fact-P_C"/>
    <property type="match status" value="1"/>
</dbReference>
<dbReference type="PIRSF" id="PIRSF005901">
    <property type="entry name" value="EF-P"/>
    <property type="match status" value="1"/>
</dbReference>
<dbReference type="SMART" id="SM01185">
    <property type="entry name" value="EFP"/>
    <property type="match status" value="1"/>
</dbReference>
<dbReference type="SMART" id="SM00841">
    <property type="entry name" value="Elong-fact-P_C"/>
    <property type="match status" value="1"/>
</dbReference>
<dbReference type="SUPFAM" id="SSF50249">
    <property type="entry name" value="Nucleic acid-binding proteins"/>
    <property type="match status" value="2"/>
</dbReference>
<dbReference type="SUPFAM" id="SSF50104">
    <property type="entry name" value="Translation proteins SH3-like domain"/>
    <property type="match status" value="1"/>
</dbReference>
<dbReference type="PROSITE" id="PS01275">
    <property type="entry name" value="EFP"/>
    <property type="match status" value="1"/>
</dbReference>
<keyword id="KW-0963">Cytoplasm</keyword>
<keyword id="KW-0251">Elongation factor</keyword>
<keyword id="KW-0648">Protein biosynthesis</keyword>
<feature type="chain" id="PRO_1000010786" description="Elongation factor P">
    <location>
        <begin position="1"/>
        <end position="187"/>
    </location>
</feature>
<reference key="1">
    <citation type="submission" date="2006-06" db="EMBL/GenBank/DDBJ databases">
        <title>Complete sequence of chromosome of Mycobacterium sp. MCS.</title>
        <authorList>
            <consortium name="US DOE Joint Genome Institute"/>
            <person name="Copeland A."/>
            <person name="Lucas S."/>
            <person name="Lapidus A."/>
            <person name="Barry K."/>
            <person name="Detter J.C."/>
            <person name="Glavina del Rio T."/>
            <person name="Hammon N."/>
            <person name="Israni S."/>
            <person name="Dalin E."/>
            <person name="Tice H."/>
            <person name="Pitluck S."/>
            <person name="Martinez M."/>
            <person name="Schmutz J."/>
            <person name="Larimer F."/>
            <person name="Land M."/>
            <person name="Hauser L."/>
            <person name="Kyrpides N."/>
            <person name="Kim E."/>
            <person name="Miller C.D."/>
            <person name="Hughes J.E."/>
            <person name="Anderson A.J."/>
            <person name="Sims R.C."/>
            <person name="Richardson P."/>
        </authorList>
    </citation>
    <scope>NUCLEOTIDE SEQUENCE [LARGE SCALE GENOMIC DNA]</scope>
    <source>
        <strain>MCS</strain>
    </source>
</reference>
<proteinExistence type="inferred from homology"/>
<accession>Q1B9G8</accession>
<organism>
    <name type="scientific">Mycobacterium sp. (strain MCS)</name>
    <dbReference type="NCBI Taxonomy" id="164756"/>
    <lineage>
        <taxon>Bacteria</taxon>
        <taxon>Bacillati</taxon>
        <taxon>Actinomycetota</taxon>
        <taxon>Actinomycetes</taxon>
        <taxon>Mycobacteriales</taxon>
        <taxon>Mycobacteriaceae</taxon>
        <taxon>Mycobacterium</taxon>
    </lineage>
</organism>
<evidence type="ECO:0000255" key="1">
    <source>
        <dbReference type="HAMAP-Rule" id="MF_00141"/>
    </source>
</evidence>
<sequence>MASTADFKNGLVLQIDGQLWQIVEFQHVKPGKGPAFVRTKLKNVVSGKVVDKTYNAGVKVETATVDRRDATYLYRDGSDFVFMDSEDYEQHPLPESLVGRAADFLLESMPVQIAFHDGVPLYLELPVTVELLVASTEPGLQGDRSSAGTKPATMETGAEIQVPLFINTGDKLKVDSRDGSYLGRVNA</sequence>
<name>EFP_MYCSS</name>
<gene>
    <name evidence="1" type="primary">efp</name>
    <name type="ordered locus">Mmcs_2358</name>
</gene>